<protein>
    <recommendedName>
        <fullName evidence="8">Adhesin AWP3b</fullName>
    </recommendedName>
</protein>
<evidence type="ECO:0000250" key="1">
    <source>
        <dbReference type="UniProtKB" id="Q6FNG1"/>
    </source>
</evidence>
<evidence type="ECO:0000255" key="2"/>
<evidence type="ECO:0000255" key="3">
    <source>
        <dbReference type="PROSITE-ProRule" id="PRU00498"/>
    </source>
</evidence>
<evidence type="ECO:0000256" key="4">
    <source>
        <dbReference type="SAM" id="MobiDB-lite"/>
    </source>
</evidence>
<evidence type="ECO:0000269" key="5">
    <source>
    </source>
</evidence>
<evidence type="ECO:0000269" key="6">
    <source>
    </source>
</evidence>
<evidence type="ECO:0000303" key="7">
    <source>
    </source>
</evidence>
<evidence type="ECO:0000303" key="8">
    <source>
    </source>
</evidence>
<evidence type="ECO:0000305" key="9"/>
<evidence type="ECO:0000312" key="10">
    <source>
        <dbReference type="EMBL" id="CAR58048.1"/>
    </source>
</evidence>
<evidence type="ECO:0000312" key="11">
    <source>
        <dbReference type="Proteomes" id="UP000002428"/>
    </source>
</evidence>
<evidence type="ECO:0007744" key="12">
    <source>
        <dbReference type="PDB" id="7O9O"/>
    </source>
</evidence>
<evidence type="ECO:0007744" key="13">
    <source>
        <dbReference type="PDB" id="7O9P"/>
    </source>
</evidence>
<sequence>MISFVTLLAILGLLSISWADQTVRSVAGDQRVTDPVIVGDNSILDYYGGSNYDFSNNFEIGRGTLYIGKESYFSSFQSAPTDVPNSFHLLIKNTNNLQNNGQFIIENIKRHANQCSNSSIQVFPINFQNDGEFEIISGGVEGRCCLPTSVIAPQNFLNNGKFYYKVLTDTGSIYSGSCMQNVDIGASTTTTVNNNLWEFTGSINAQINGAVSGAAQINLDGSNMFVNANTFSGQVVNLINGGSFLQTSDPLSNIVVINGLGTSDTGVTSIAVKGKGKSFTYNPSSGIVKLTTVEGKTYAYQIGCGYNTKKFITNNDSGASYESADNFFVLTYSEPYSPQTCQLENSSIFSSNFISTSTSSSSSSSSASSLPSSMSSSLPSSLSSSLSSSLSSSMSSSMSSLFIIPPPYTTTRSSGSSIIDTEIVSFYSTTDSPGHTITGTTTTTLYGPHTHSSVSTPSSSSESSTTSNSSIESSSLPHTSVSSTPESSITPSSNTISSSPTSDFSSVQSSSIMESSSVVASSSVINSSSIVDSSSSSASSLPSSMSSSLSSSMSSSLPSSMSSSLSSSLSSSLSSSMSSSMSSLFIIPPPYTTTRSSGSSIIDTEIVSFYSTTDSPGHTITGTTTTTLYGPHTHSSVSTPSSSSESSTTSNSSIESSSLPHTSVSSTPESSITPSSNTISSSPTSDFSSVQSSSIMESSSVVASSSVINSSSIVDSSSSSASSLPSSMPSSLPSSMSSSLSSSMSSSLSSSLSSSLSSSMSSSMSSLFIIPPPYTTTRSSGSSIIDTEIVSFYSTTDSPGHTITGTTTTTLYGPHTHSSVSTPSSSSESSTTSNSSIESSSLPHTSVSSTPESSITPSSNTISSSPTSDFSSVQSSSIMESSSVVASSSATQSSSVINSSSIVDSSSSSASSLPSSMPSSLPSSLSSSLSSSLSSSMSSSMSSLFIIPPPYTTTRSSGSSIIDTEIVSFYSTTDSPGHTITGTTTTTLYESSIYSSSSSTIQESELSNTSRTTMTSNSSVSISSTSSRSSFSNTKSSTIVISQSASLPDSKTDIILSTSSNIGYSSRSLLSDLGTSISDSDIHHSVLHSTESYSSNESGTNPFTSIASLSNFIPESSSHTSTALGSENSVISSDILTTMSHPVATNSGDKPTTPKRSEQVSTTMTSSGPTPDTSSFDTDGMSAYSRPEFTTNSLEVNKSSTSQLGNNKQTFSNLQLESTRPHSENEVDNNTRLLQSIQQSSTYGTNNVNPLSPTGSISIPLTEDGQGDNNNWNSPATNDLCTQISFNLTATTITVTDRITITDSIHDISSEVITSYIYQTIVDQKTVTQTVDGKSLANKMSSIPKPSSRSLIQPQPPVAIELQEGAASTSRVSLVSLFISIILVLL</sequence>
<reference evidence="11" key="1">
    <citation type="journal article" date="2004" name="Nature">
        <title>Genome evolution in yeasts.</title>
        <authorList>
            <person name="Dujon B."/>
            <person name="Sherman D."/>
            <person name="Fischer G."/>
            <person name="Durrens P."/>
            <person name="Casaregola S."/>
            <person name="Lafontaine I."/>
            <person name="de Montigny J."/>
            <person name="Marck C."/>
            <person name="Neuveglise C."/>
            <person name="Talla E."/>
            <person name="Goffard N."/>
            <person name="Frangeul L."/>
            <person name="Aigle M."/>
            <person name="Anthouard V."/>
            <person name="Babour A."/>
            <person name="Barbe V."/>
            <person name="Barnay S."/>
            <person name="Blanchin S."/>
            <person name="Beckerich J.-M."/>
            <person name="Beyne E."/>
            <person name="Bleykasten C."/>
            <person name="Boisrame A."/>
            <person name="Boyer J."/>
            <person name="Cattolico L."/>
            <person name="Confanioleri F."/>
            <person name="de Daruvar A."/>
            <person name="Despons L."/>
            <person name="Fabre E."/>
            <person name="Fairhead C."/>
            <person name="Ferry-Dumazet H."/>
            <person name="Groppi A."/>
            <person name="Hantraye F."/>
            <person name="Hennequin C."/>
            <person name="Jauniaux N."/>
            <person name="Joyet P."/>
            <person name="Kachouri R."/>
            <person name="Kerrest A."/>
            <person name="Koszul R."/>
            <person name="Lemaire M."/>
            <person name="Lesur I."/>
            <person name="Ma L."/>
            <person name="Muller H."/>
            <person name="Nicaud J.-M."/>
            <person name="Nikolski M."/>
            <person name="Oztas S."/>
            <person name="Ozier-Kalogeropoulos O."/>
            <person name="Pellenz S."/>
            <person name="Potier S."/>
            <person name="Richard G.-F."/>
            <person name="Straub M.-L."/>
            <person name="Suleau A."/>
            <person name="Swennen D."/>
            <person name="Tekaia F."/>
            <person name="Wesolowski-Louvel M."/>
            <person name="Westhof E."/>
            <person name="Wirth B."/>
            <person name="Zeniou-Meyer M."/>
            <person name="Zivanovic Y."/>
            <person name="Bolotin-Fukuhara M."/>
            <person name="Thierry A."/>
            <person name="Bouchier C."/>
            <person name="Caudron B."/>
            <person name="Scarpelli C."/>
            <person name="Gaillardin C."/>
            <person name="Weissenbach J."/>
            <person name="Wincker P."/>
            <person name="Souciet J.-L."/>
        </authorList>
    </citation>
    <scope>NUCLEOTIDE SEQUENCE [LARGE SCALE GENOMIC DNA] OF 179-1386</scope>
    <source>
        <strain>ATCC 2001 / BCRC 20586 / JCM 3761 / NBRC 0622 / NRRL Y-65 / CBS 138</strain>
    </source>
</reference>
<reference evidence="9" key="2">
    <citation type="journal article" date="2008" name="Eukaryot. Cell">
        <title>The cell wall of the human pathogen Candida glabrata: differential incorporation of novel adhesin-like wall proteins.</title>
        <authorList>
            <person name="de Groot P.W."/>
            <person name="Kraneveld E.A."/>
            <person name="Yin Q.Y."/>
            <person name="Dekker H.L."/>
            <person name="Gross U."/>
            <person name="Crielaard W."/>
            <person name="de Koster C.G."/>
            <person name="Bader O."/>
            <person name="Klis F.M."/>
            <person name="Weig M."/>
        </authorList>
    </citation>
    <scope>PROTEIN SEQUENCE OF 70-92 AND 297-309</scope>
    <scope>IDENTIFICATION BY MASS SPECTROMETRY</scope>
    <scope>SUBCELLULAR LOCATION</scope>
</reference>
<reference evidence="12 13" key="3">
    <citation type="journal article" date="2021" name="PLoS Pathog.">
        <title>A novel class of Candida glabrata cell wall proteins with beta-helix fold mediates adhesion in clinical isolates.</title>
        <authorList>
            <person name="Reithofer V."/>
            <person name="Fernandez-Pereira J."/>
            <person name="Alvarado M."/>
            <person name="de Groot P."/>
            <person name="Essen L.O."/>
        </authorList>
    </citation>
    <scope>X-RAY CRYSTALLOGRAPHY (1.55 ANGSTROMS) OF 20-344</scope>
    <scope>DISULFIDE BOND</scope>
</reference>
<dbReference type="EMBL" id="CR380956">
    <property type="protein sequence ID" value="CAR58048.1"/>
    <property type="status" value="ALT_INIT"/>
    <property type="molecule type" value="Genomic_DNA"/>
</dbReference>
<dbReference type="PDB" id="7O9O">
    <property type="method" value="X-ray"/>
    <property type="resolution" value="1.55 A"/>
    <property type="chains" value="A=20-344"/>
</dbReference>
<dbReference type="PDB" id="7O9P">
    <property type="method" value="X-ray"/>
    <property type="resolution" value="1.99 A"/>
    <property type="chains" value="A=21-338"/>
</dbReference>
<dbReference type="PDBsum" id="7O9O"/>
<dbReference type="PDBsum" id="7O9P"/>
<dbReference type="SMR" id="B4UN32"/>
<dbReference type="STRING" id="284593.B4UN32"/>
<dbReference type="GlyCosmos" id="B4UN32">
    <property type="glycosylation" value="15 sites, No reported glycans"/>
</dbReference>
<dbReference type="HOGENOM" id="CLU_270009_0_0_1"/>
<dbReference type="InParanoid" id="B4UN32"/>
<dbReference type="Proteomes" id="UP000002428">
    <property type="component" value="Chromosome J"/>
</dbReference>
<dbReference type="GO" id="GO:0005576">
    <property type="term" value="C:extracellular region"/>
    <property type="evidence" value="ECO:0007669"/>
    <property type="project" value="UniProtKB-KW"/>
</dbReference>
<dbReference type="GO" id="GO:0009277">
    <property type="term" value="C:fungal-type cell wall"/>
    <property type="evidence" value="ECO:0000314"/>
    <property type="project" value="UniProtKB"/>
</dbReference>
<dbReference type="GO" id="GO:0098631">
    <property type="term" value="F:cell adhesion mediator activity"/>
    <property type="evidence" value="ECO:0000250"/>
    <property type="project" value="UniProtKB"/>
</dbReference>
<dbReference type="GO" id="GO:0007155">
    <property type="term" value="P:cell adhesion"/>
    <property type="evidence" value="ECO:0000250"/>
    <property type="project" value="UniProtKB"/>
</dbReference>
<dbReference type="InterPro" id="IPR049451">
    <property type="entry name" value="AWP2-like_YTTT_rpt"/>
</dbReference>
<dbReference type="Pfam" id="PF20646">
    <property type="entry name" value="Hpf1_C"/>
    <property type="match status" value="4"/>
</dbReference>
<dbReference type="PROSITE" id="PS00141">
    <property type="entry name" value="ASP_PROTEASE"/>
    <property type="match status" value="1"/>
</dbReference>
<comment type="function">
    <text evidence="1">May play a role in cell adhesion.</text>
</comment>
<comment type="subcellular location">
    <subcellularLocation>
        <location evidence="5">Secreted</location>
        <location evidence="5">Cell wall</location>
    </subcellularLocation>
    <text evidence="7">May be GPI-anchored.</text>
</comment>
<comment type="sequence caution" evidence="9">
    <conflict type="erroneous initiation">
        <sequence resource="EMBL-CDS" id="CAR58048"/>
    </conflict>
    <text>Truncated N-terminus.</text>
</comment>
<gene>
    <name evidence="8" type="primary">AWP3b</name>
    <name evidence="10" type="ordered locus">CAGL0J11891g</name>
</gene>
<name>AWP3B_CANGA</name>
<organism evidence="11">
    <name type="scientific">Candida glabrata (strain ATCC 2001 / BCRC 20586 / JCM 3761 / NBRC 0622 / NRRL Y-65 / CBS 138)</name>
    <name type="common">Yeast</name>
    <name type="synonym">Nakaseomyces glabratus</name>
    <dbReference type="NCBI Taxonomy" id="284593"/>
    <lineage>
        <taxon>Eukaryota</taxon>
        <taxon>Fungi</taxon>
        <taxon>Dikarya</taxon>
        <taxon>Ascomycota</taxon>
        <taxon>Saccharomycotina</taxon>
        <taxon>Saccharomycetes</taxon>
        <taxon>Saccharomycetales</taxon>
        <taxon>Saccharomycetaceae</taxon>
        <taxon>Nakaseomyces</taxon>
    </lineage>
</organism>
<accession>B4UN32</accession>
<feature type="signal peptide" evidence="2">
    <location>
        <begin position="1"/>
        <end position="19"/>
    </location>
</feature>
<feature type="chain" id="PRO_0000455716" description="Adhesin AWP3b" evidence="2">
    <location>
        <begin position="20"/>
        <end position="1386"/>
    </location>
</feature>
<feature type="region of interest" description="Disordered" evidence="4">
    <location>
        <begin position="429"/>
        <end position="507"/>
    </location>
</feature>
<feature type="region of interest" description="Disordered" evidence="4">
    <location>
        <begin position="530"/>
        <end position="553"/>
    </location>
</feature>
<feature type="region of interest" description="Disordered" evidence="4">
    <location>
        <begin position="612"/>
        <end position="690"/>
    </location>
</feature>
<feature type="region of interest" description="Disordered" evidence="4">
    <location>
        <begin position="714"/>
        <end position="739"/>
    </location>
</feature>
<feature type="region of interest" description="Disordered" evidence="4">
    <location>
        <begin position="795"/>
        <end position="873"/>
    </location>
</feature>
<feature type="region of interest" description="Disordered" evidence="4">
    <location>
        <begin position="1000"/>
        <end position="1032"/>
    </location>
</feature>
<feature type="region of interest" description="Disordered" evidence="4">
    <location>
        <begin position="1140"/>
        <end position="1186"/>
    </location>
</feature>
<feature type="region of interest" description="Disordered" evidence="4">
    <location>
        <begin position="1198"/>
        <end position="1227"/>
    </location>
</feature>
<feature type="region of interest" description="Disordered" evidence="4">
    <location>
        <begin position="1241"/>
        <end position="1269"/>
    </location>
</feature>
<feature type="compositionally biased region" description="Polar residues" evidence="4">
    <location>
        <begin position="1140"/>
        <end position="1150"/>
    </location>
</feature>
<feature type="compositionally biased region" description="Polar residues" evidence="4">
    <location>
        <begin position="1159"/>
        <end position="1177"/>
    </location>
</feature>
<feature type="compositionally biased region" description="Polar residues" evidence="4">
    <location>
        <begin position="1198"/>
        <end position="1218"/>
    </location>
</feature>
<feature type="compositionally biased region" description="Polar residues" evidence="4">
    <location>
        <begin position="1241"/>
        <end position="1259"/>
    </location>
</feature>
<feature type="glycosylation site" description="N-linked (GlcNAc...) asparagine" evidence="3">
    <location>
        <position position="117"/>
    </location>
</feature>
<feature type="glycosylation site" description="N-linked (GlcNAc...) asparagine" evidence="3">
    <location>
        <position position="315"/>
    </location>
</feature>
<feature type="glycosylation site" description="N-linked (GlcNAc...) asparagine" evidence="3">
    <location>
        <position position="345"/>
    </location>
</feature>
<feature type="glycosylation site" description="N-linked (GlcNAc...) asparagine" evidence="3">
    <location>
        <position position="468"/>
    </location>
</feature>
<feature type="glycosylation site" description="N-linked (GlcNAc...) asparagine" evidence="3">
    <location>
        <position position="526"/>
    </location>
</feature>
<feature type="glycosylation site" description="N-linked (GlcNAc...) asparagine" evidence="3">
    <location>
        <position position="651"/>
    </location>
</feature>
<feature type="glycosylation site" description="N-linked (GlcNAc...) asparagine" evidence="3">
    <location>
        <position position="709"/>
    </location>
</feature>
<feature type="glycosylation site" description="N-linked (GlcNAc...) asparagine" evidence="3">
    <location>
        <position position="834"/>
    </location>
</feature>
<feature type="glycosylation site" description="N-linked (GlcNAc...) asparagine" evidence="3">
    <location>
        <position position="898"/>
    </location>
</feature>
<feature type="glycosylation site" description="N-linked (GlcNAc...) asparagine" evidence="3">
    <location>
        <position position="1008"/>
    </location>
</feature>
<feature type="glycosylation site" description="N-linked (GlcNAc...) asparagine" evidence="3">
    <location>
        <position position="1017"/>
    </location>
</feature>
<feature type="glycosylation site" description="N-linked (GlcNAc...) asparagine" evidence="3">
    <location>
        <position position="1096"/>
    </location>
</feature>
<feature type="glycosylation site" description="N-linked (GlcNAc...) asparagine" evidence="3">
    <location>
        <position position="1197"/>
    </location>
</feature>
<feature type="glycosylation site" description="N-linked (GlcNAc...) asparagine" evidence="3">
    <location>
        <position position="1229"/>
    </location>
</feature>
<feature type="glycosylation site" description="N-linked (GlcNAc...) asparagine" evidence="3">
    <location>
        <position position="1287"/>
    </location>
</feature>
<feature type="disulfide bond" evidence="6 12 13">
    <location>
        <begin position="115"/>
        <end position="145"/>
    </location>
</feature>
<feature type="disulfide bond" evidence="6 12 13">
    <location>
        <begin position="144"/>
        <end position="178"/>
    </location>
</feature>
<feature type="disulfide bond" evidence="6 12">
    <location>
        <begin position="304"/>
        <end position="341"/>
    </location>
</feature>
<proteinExistence type="evidence at protein level"/>
<keyword id="KW-0002">3D-structure</keyword>
<keyword id="KW-0130">Cell adhesion</keyword>
<keyword id="KW-0134">Cell wall</keyword>
<keyword id="KW-0903">Direct protein sequencing</keyword>
<keyword id="KW-1015">Disulfide bond</keyword>
<keyword id="KW-0325">Glycoprotein</keyword>
<keyword id="KW-1185">Reference proteome</keyword>
<keyword id="KW-0964">Secreted</keyword>
<keyword id="KW-0732">Signal</keyword>